<comment type="cofactor">
    <cofactor evidence="1">
        <name>Fe(2+)</name>
        <dbReference type="ChEBI" id="CHEBI:29033"/>
    </cofactor>
    <text evidence="1">Binds 1 Fe(2+) ion per subunit.</text>
</comment>
<comment type="cofactor">
    <cofactor evidence="1">
        <name>L-ascorbate</name>
        <dbReference type="ChEBI" id="CHEBI:38290"/>
    </cofactor>
</comment>
<comment type="sequence caution" evidence="2">
    <conflict type="erroneous initiation">
        <sequence resource="EMBL-CDS" id="ABR84968"/>
    </conflict>
</comment>
<accession>A6VBN0</accession>
<evidence type="ECO:0000255" key="1">
    <source>
        <dbReference type="HAMAP-Rule" id="MF_00657"/>
    </source>
</evidence>
<evidence type="ECO:0000305" key="2"/>
<organism>
    <name type="scientific">Pseudomonas paraeruginosa (strain DSM 24068 / PA7)</name>
    <name type="common">Pseudomonas aeruginosa (strain PA7)</name>
    <dbReference type="NCBI Taxonomy" id="381754"/>
    <lineage>
        <taxon>Bacteria</taxon>
        <taxon>Pseudomonadati</taxon>
        <taxon>Pseudomonadota</taxon>
        <taxon>Gammaproteobacteria</taxon>
        <taxon>Pseudomonadales</taxon>
        <taxon>Pseudomonadaceae</taxon>
        <taxon>Pseudomonas</taxon>
        <taxon>Pseudomonas paraeruginosa</taxon>
    </lineage>
</organism>
<gene>
    <name type="ordered locus">PSPA7_5129</name>
</gene>
<keyword id="KW-0223">Dioxygenase</keyword>
<keyword id="KW-0408">Iron</keyword>
<keyword id="KW-0479">Metal-binding</keyword>
<keyword id="KW-0560">Oxidoreductase</keyword>
<keyword id="KW-0847">Vitamin C</keyword>
<sequence>MLLHIPALFTADEVSRIRAALEQAEWADGKATAGYQSAKAKHNLQLPQDHPLAREIGEAMLQRLWNHPLFMSAALPLKVFPPLFNCYTGGGSFDFHIDNAVRDIQGGRERVRTDLSSTLFFSDPQDYDGGELVIQDTYGLHQVKLPAGDLVLYPGTSLHKVNPVTRGARYASFFWTQSLVREDSQRTLLFEMDQSIQQLTRDVPEHPSLIRLTGTYHNLLRRWSEL</sequence>
<name>Y5129_PSEP7</name>
<reference key="1">
    <citation type="submission" date="2007-06" db="EMBL/GenBank/DDBJ databases">
        <authorList>
            <person name="Dodson R.J."/>
            <person name="Harkins D."/>
            <person name="Paulsen I.T."/>
        </authorList>
    </citation>
    <scope>NUCLEOTIDE SEQUENCE [LARGE SCALE GENOMIC DNA]</scope>
    <source>
        <strain>DSM 24068 / PA7</strain>
    </source>
</reference>
<proteinExistence type="inferred from homology"/>
<feature type="chain" id="PRO_0000346509" description="PKHD-type hydroxylase PSPA7_5129">
    <location>
        <begin position="1"/>
        <end position="226"/>
    </location>
</feature>
<feature type="domain" description="Fe2OG dioxygenase" evidence="1">
    <location>
        <begin position="78"/>
        <end position="178"/>
    </location>
</feature>
<feature type="binding site" evidence="1">
    <location>
        <position position="96"/>
    </location>
    <ligand>
        <name>Fe cation</name>
        <dbReference type="ChEBI" id="CHEBI:24875"/>
    </ligand>
</feature>
<feature type="binding site" evidence="1">
    <location>
        <position position="98"/>
    </location>
    <ligand>
        <name>Fe cation</name>
        <dbReference type="ChEBI" id="CHEBI:24875"/>
    </ligand>
</feature>
<feature type="binding site" evidence="1">
    <location>
        <position position="159"/>
    </location>
    <ligand>
        <name>Fe cation</name>
        <dbReference type="ChEBI" id="CHEBI:24875"/>
    </ligand>
</feature>
<feature type="binding site" evidence="1">
    <location>
        <position position="169"/>
    </location>
    <ligand>
        <name>2-oxoglutarate</name>
        <dbReference type="ChEBI" id="CHEBI:16810"/>
    </ligand>
</feature>
<dbReference type="EC" id="1.14.11.-" evidence="1"/>
<dbReference type="EMBL" id="CP000744">
    <property type="protein sequence ID" value="ABR84968.1"/>
    <property type="status" value="ALT_INIT"/>
    <property type="molecule type" value="Genomic_DNA"/>
</dbReference>
<dbReference type="RefSeq" id="WP_034081372.1">
    <property type="nucleotide sequence ID" value="NC_009656.1"/>
</dbReference>
<dbReference type="SMR" id="A6VBN0"/>
<dbReference type="GeneID" id="77223016"/>
<dbReference type="KEGG" id="pap:PSPA7_5129"/>
<dbReference type="HOGENOM" id="CLU_106663_0_0_6"/>
<dbReference type="Proteomes" id="UP000001582">
    <property type="component" value="Chromosome"/>
</dbReference>
<dbReference type="GO" id="GO:0016706">
    <property type="term" value="F:2-oxoglutarate-dependent dioxygenase activity"/>
    <property type="evidence" value="ECO:0007669"/>
    <property type="project" value="UniProtKB-UniRule"/>
</dbReference>
<dbReference type="GO" id="GO:0005506">
    <property type="term" value="F:iron ion binding"/>
    <property type="evidence" value="ECO:0007669"/>
    <property type="project" value="UniProtKB-UniRule"/>
</dbReference>
<dbReference type="GO" id="GO:0031418">
    <property type="term" value="F:L-ascorbic acid binding"/>
    <property type="evidence" value="ECO:0007669"/>
    <property type="project" value="UniProtKB-KW"/>
</dbReference>
<dbReference type="GO" id="GO:0006974">
    <property type="term" value="P:DNA damage response"/>
    <property type="evidence" value="ECO:0007669"/>
    <property type="project" value="TreeGrafter"/>
</dbReference>
<dbReference type="GO" id="GO:0006879">
    <property type="term" value="P:intracellular iron ion homeostasis"/>
    <property type="evidence" value="ECO:0007669"/>
    <property type="project" value="TreeGrafter"/>
</dbReference>
<dbReference type="FunFam" id="2.60.120.620:FF:000006">
    <property type="entry name" value="PKHD-type hydroxylase YbiX"/>
    <property type="match status" value="1"/>
</dbReference>
<dbReference type="FunFam" id="4.10.860.20:FF:000001">
    <property type="entry name" value="PKHD-type hydroxylase YbiX"/>
    <property type="match status" value="1"/>
</dbReference>
<dbReference type="Gene3D" id="2.60.120.620">
    <property type="entry name" value="q2cbj1_9rhob like domain"/>
    <property type="match status" value="1"/>
</dbReference>
<dbReference type="Gene3D" id="4.10.860.20">
    <property type="entry name" value="Rabenosyn, Rab binding domain"/>
    <property type="match status" value="1"/>
</dbReference>
<dbReference type="HAMAP" id="MF_00657">
    <property type="entry name" value="Hydroxyl_YbiX"/>
    <property type="match status" value="1"/>
</dbReference>
<dbReference type="InterPro" id="IPR005123">
    <property type="entry name" value="Oxoglu/Fe-dep_dioxygenase_dom"/>
</dbReference>
<dbReference type="InterPro" id="IPR041097">
    <property type="entry name" value="PKHD_C"/>
</dbReference>
<dbReference type="InterPro" id="IPR023550">
    <property type="entry name" value="PKHD_hydroxylase"/>
</dbReference>
<dbReference type="InterPro" id="IPR006620">
    <property type="entry name" value="Pro_4_hyd_alph"/>
</dbReference>
<dbReference type="InterPro" id="IPR044862">
    <property type="entry name" value="Pro_4_hyd_alph_FE2OG_OXY"/>
</dbReference>
<dbReference type="NCBIfam" id="NF003974">
    <property type="entry name" value="PRK05467.1-3"/>
    <property type="match status" value="1"/>
</dbReference>
<dbReference type="NCBIfam" id="NF003975">
    <property type="entry name" value="PRK05467.1-4"/>
    <property type="match status" value="1"/>
</dbReference>
<dbReference type="PANTHER" id="PTHR41536">
    <property type="entry name" value="PKHD-TYPE HYDROXYLASE YBIX"/>
    <property type="match status" value="1"/>
</dbReference>
<dbReference type="PANTHER" id="PTHR41536:SF1">
    <property type="entry name" value="PKHD-TYPE HYDROXYLASE YBIX"/>
    <property type="match status" value="1"/>
</dbReference>
<dbReference type="Pfam" id="PF13640">
    <property type="entry name" value="2OG-FeII_Oxy_3"/>
    <property type="match status" value="1"/>
</dbReference>
<dbReference type="Pfam" id="PF18331">
    <property type="entry name" value="PKHD_C"/>
    <property type="match status" value="1"/>
</dbReference>
<dbReference type="SMART" id="SM00702">
    <property type="entry name" value="P4Hc"/>
    <property type="match status" value="1"/>
</dbReference>
<dbReference type="SUPFAM" id="SSF51197">
    <property type="entry name" value="Clavaminate synthase-like"/>
    <property type="match status" value="1"/>
</dbReference>
<dbReference type="PROSITE" id="PS51471">
    <property type="entry name" value="FE2OG_OXY"/>
    <property type="match status" value="1"/>
</dbReference>
<protein>
    <recommendedName>
        <fullName evidence="1">PKHD-type hydroxylase PSPA7_5129</fullName>
        <ecNumber evidence="1">1.14.11.-</ecNumber>
    </recommendedName>
</protein>